<evidence type="ECO:0000256" key="1">
    <source>
        <dbReference type="SAM" id="MobiDB-lite"/>
    </source>
</evidence>
<evidence type="ECO:0000269" key="2">
    <source>
    </source>
</evidence>
<evidence type="ECO:0000305" key="3"/>
<organism>
    <name type="scientific">Coturnix japonica</name>
    <name type="common">Japanese quail</name>
    <name type="synonym">Coturnix coturnix japonica</name>
    <dbReference type="NCBI Taxonomy" id="93934"/>
    <lineage>
        <taxon>Eukaryota</taxon>
        <taxon>Metazoa</taxon>
        <taxon>Chordata</taxon>
        <taxon>Craniata</taxon>
        <taxon>Vertebrata</taxon>
        <taxon>Euteleostomi</taxon>
        <taxon>Archelosauria</taxon>
        <taxon>Archosauria</taxon>
        <taxon>Dinosauria</taxon>
        <taxon>Saurischia</taxon>
        <taxon>Theropoda</taxon>
        <taxon>Coelurosauria</taxon>
        <taxon>Aves</taxon>
        <taxon>Neognathae</taxon>
        <taxon>Galloanserae</taxon>
        <taxon>Galliformes</taxon>
        <taxon>Phasianidae</taxon>
        <taxon>Perdicinae</taxon>
        <taxon>Coturnix</taxon>
    </lineage>
</organism>
<gene>
    <name type="primary">SMAP</name>
</gene>
<name>SMAP_COTJA</name>
<reference key="1">
    <citation type="journal article" date="1997" name="Int. J. Dev. Neurosci.">
        <title>Novel genes expressed in the chick otocyst during development: identification using differential display of RNA.</title>
        <authorList>
            <person name="Gong T.-W."/>
            <person name="Hegeman A.D."/>
            <person name="Shin J.J."/>
            <person name="Lindberg K.H."/>
            <person name="Barald K.F."/>
            <person name="Lomax M.I."/>
        </authorList>
    </citation>
    <scope>NUCLEOTIDE SEQUENCE [MRNA]</scope>
    <scope>TISSUE SPECIFICITY</scope>
    <source>
        <tissue>Embryonic head</tissue>
    </source>
</reference>
<feature type="chain" id="PRO_0000263660" description="Small acidic protein">
    <location>
        <begin position="1"/>
        <end position="172"/>
    </location>
</feature>
<feature type="region of interest" description="Disordered" evidence="1">
    <location>
        <begin position="1"/>
        <end position="172"/>
    </location>
</feature>
<feature type="compositionally biased region" description="Polar residues" evidence="1">
    <location>
        <begin position="1"/>
        <end position="10"/>
    </location>
</feature>
<feature type="compositionally biased region" description="Basic and acidic residues" evidence="1">
    <location>
        <begin position="46"/>
        <end position="76"/>
    </location>
</feature>
<feature type="compositionally biased region" description="Polar residues" evidence="1">
    <location>
        <begin position="80"/>
        <end position="92"/>
    </location>
</feature>
<feature type="compositionally biased region" description="Basic and acidic residues" evidence="1">
    <location>
        <begin position="112"/>
        <end position="122"/>
    </location>
</feature>
<feature type="compositionally biased region" description="Acidic residues" evidence="1">
    <location>
        <begin position="123"/>
        <end position="138"/>
    </location>
</feature>
<feature type="compositionally biased region" description="Basic and acidic residues" evidence="1">
    <location>
        <begin position="142"/>
        <end position="160"/>
    </location>
</feature>
<accession>Q90368</accession>
<sequence>MSSARDSQAQHGLKRAASPDGSGSWQAADLGNEERKQKFLRLMGAGKKEHTGRLVIGDHRSTSHFRTGEEDKKMNEELESQYQQSMDSTMSGRNRRHCGLGFSEFQEVEEEAAGHSSDHESSEDSESGSDSEQDESAEELQAAEKHDEAAVPENKKEAKSNYKMMFVKASGS</sequence>
<comment type="tissue specificity">
    <text evidence="2">Expressed in otocyst.</text>
</comment>
<comment type="similarity">
    <text evidence="3">Belongs to the SMAP family.</text>
</comment>
<dbReference type="EMBL" id="U37722">
    <property type="protein sequence ID" value="AAC00524.1"/>
    <property type="molecule type" value="mRNA"/>
</dbReference>
<dbReference type="Ensembl" id="ENSCJPT00005008986.1">
    <property type="protein sequence ID" value="ENSCJPP00005005551.1"/>
    <property type="gene ID" value="ENSCJPG00005005288.1"/>
</dbReference>
<dbReference type="GeneID" id="107314664"/>
<dbReference type="KEGG" id="cjo:107314664"/>
<dbReference type="CTD" id="137427592"/>
<dbReference type="GeneTree" id="ENSGT00390000000687"/>
<dbReference type="OrthoDB" id="10066125at2759"/>
<dbReference type="Proteomes" id="UP000694412">
    <property type="component" value="Chromosome 5"/>
</dbReference>
<dbReference type="InterPro" id="IPR026714">
    <property type="entry name" value="SMAP"/>
</dbReference>
<dbReference type="InterPro" id="IPR028124">
    <property type="entry name" value="SMAP_dom"/>
</dbReference>
<dbReference type="PANTHER" id="PTHR22175:SF0">
    <property type="entry name" value="SMALL ACIDIC PROTEIN"/>
    <property type="match status" value="1"/>
</dbReference>
<dbReference type="PANTHER" id="PTHR22175">
    <property type="entry name" value="SMALL ACIDIC PROTEIN-RELATED"/>
    <property type="match status" value="1"/>
</dbReference>
<dbReference type="Pfam" id="PF15477">
    <property type="entry name" value="SMAP"/>
    <property type="match status" value="1"/>
</dbReference>
<protein>
    <recommendedName>
        <fullName>Small acidic protein</fullName>
    </recommendedName>
</protein>
<keyword id="KW-1185">Reference proteome</keyword>
<proteinExistence type="evidence at transcript level"/>